<organism>
    <name type="scientific">Brevibacillus brevis (strain 47 / JCM 6285 / NBRC 100599)</name>
    <dbReference type="NCBI Taxonomy" id="358681"/>
    <lineage>
        <taxon>Bacteria</taxon>
        <taxon>Bacillati</taxon>
        <taxon>Bacillota</taxon>
        <taxon>Bacilli</taxon>
        <taxon>Bacillales</taxon>
        <taxon>Paenibacillaceae</taxon>
        <taxon>Brevibacillus</taxon>
    </lineage>
</organism>
<accession>C0ZIH9</accession>
<evidence type="ECO:0000255" key="1">
    <source>
        <dbReference type="HAMAP-Rule" id="MF_00508"/>
    </source>
</evidence>
<evidence type="ECO:0000305" key="2"/>
<name>RS10_BREBN</name>
<protein>
    <recommendedName>
        <fullName evidence="1">Small ribosomal subunit protein uS10</fullName>
    </recommendedName>
    <alternativeName>
        <fullName evidence="2">30S ribosomal protein S10</fullName>
    </alternativeName>
</protein>
<comment type="function">
    <text evidence="1">Involved in the binding of tRNA to the ribosomes.</text>
</comment>
<comment type="subunit">
    <text evidence="1">Part of the 30S ribosomal subunit.</text>
</comment>
<comment type="similarity">
    <text evidence="1">Belongs to the universal ribosomal protein uS10 family.</text>
</comment>
<reference key="1">
    <citation type="submission" date="2005-03" db="EMBL/GenBank/DDBJ databases">
        <title>Brevibacillus brevis strain 47, complete genome.</title>
        <authorList>
            <person name="Hosoyama A."/>
            <person name="Yamada R."/>
            <person name="Hongo Y."/>
            <person name="Terui Y."/>
            <person name="Ankai A."/>
            <person name="Masuyama W."/>
            <person name="Sekiguchi M."/>
            <person name="Takeda T."/>
            <person name="Asano K."/>
            <person name="Ohji S."/>
            <person name="Ichikawa N."/>
            <person name="Narita S."/>
            <person name="Aoki N."/>
            <person name="Miura H."/>
            <person name="Matsushita S."/>
            <person name="Sekigawa T."/>
            <person name="Yamagata H."/>
            <person name="Yoshikawa H."/>
            <person name="Udaka S."/>
            <person name="Tanikawa S."/>
            <person name="Fujita N."/>
        </authorList>
    </citation>
    <scope>NUCLEOTIDE SEQUENCE [LARGE SCALE GENOMIC DNA]</scope>
    <source>
        <strain>47 / JCM 6285 / NBRC 100599</strain>
    </source>
</reference>
<sequence>MAKQKIRIRLKAYDHKILDQSAEKIVDTAKRSGANVSGPIPLPTEKAVYTILRAVHKYKDSREQFEMRTHKRLIDILNPTPQTVDALMRLDLPSGVDIEIKL</sequence>
<proteinExistence type="inferred from homology"/>
<dbReference type="EMBL" id="AP008955">
    <property type="protein sequence ID" value="BAH41197.1"/>
    <property type="molecule type" value="Genomic_DNA"/>
</dbReference>
<dbReference type="RefSeq" id="WP_005828858.1">
    <property type="nucleotide sequence ID" value="NC_012491.1"/>
</dbReference>
<dbReference type="SMR" id="C0ZIH9"/>
<dbReference type="STRING" id="358681.BBR47_02200"/>
<dbReference type="GeneID" id="87610179"/>
<dbReference type="KEGG" id="bbe:BBR47_02200"/>
<dbReference type="eggNOG" id="COG0051">
    <property type="taxonomic scope" value="Bacteria"/>
</dbReference>
<dbReference type="HOGENOM" id="CLU_122625_1_3_9"/>
<dbReference type="Proteomes" id="UP000001877">
    <property type="component" value="Chromosome"/>
</dbReference>
<dbReference type="GO" id="GO:1990904">
    <property type="term" value="C:ribonucleoprotein complex"/>
    <property type="evidence" value="ECO:0007669"/>
    <property type="project" value="UniProtKB-KW"/>
</dbReference>
<dbReference type="GO" id="GO:0005840">
    <property type="term" value="C:ribosome"/>
    <property type="evidence" value="ECO:0007669"/>
    <property type="project" value="UniProtKB-KW"/>
</dbReference>
<dbReference type="GO" id="GO:0003735">
    <property type="term" value="F:structural constituent of ribosome"/>
    <property type="evidence" value="ECO:0007669"/>
    <property type="project" value="InterPro"/>
</dbReference>
<dbReference type="GO" id="GO:0000049">
    <property type="term" value="F:tRNA binding"/>
    <property type="evidence" value="ECO:0007669"/>
    <property type="project" value="UniProtKB-UniRule"/>
</dbReference>
<dbReference type="GO" id="GO:0006412">
    <property type="term" value="P:translation"/>
    <property type="evidence" value="ECO:0007669"/>
    <property type="project" value="UniProtKB-UniRule"/>
</dbReference>
<dbReference type="FunFam" id="3.30.70.600:FF:000001">
    <property type="entry name" value="30S ribosomal protein S10"/>
    <property type="match status" value="1"/>
</dbReference>
<dbReference type="Gene3D" id="3.30.70.600">
    <property type="entry name" value="Ribosomal protein S10 domain"/>
    <property type="match status" value="1"/>
</dbReference>
<dbReference type="HAMAP" id="MF_00508">
    <property type="entry name" value="Ribosomal_uS10"/>
    <property type="match status" value="1"/>
</dbReference>
<dbReference type="InterPro" id="IPR001848">
    <property type="entry name" value="Ribosomal_uS10"/>
</dbReference>
<dbReference type="InterPro" id="IPR018268">
    <property type="entry name" value="Ribosomal_uS10_CS"/>
</dbReference>
<dbReference type="InterPro" id="IPR027486">
    <property type="entry name" value="Ribosomal_uS10_dom"/>
</dbReference>
<dbReference type="InterPro" id="IPR036838">
    <property type="entry name" value="Ribosomal_uS10_dom_sf"/>
</dbReference>
<dbReference type="NCBIfam" id="NF001861">
    <property type="entry name" value="PRK00596.1"/>
    <property type="match status" value="1"/>
</dbReference>
<dbReference type="NCBIfam" id="TIGR01049">
    <property type="entry name" value="rpsJ_bact"/>
    <property type="match status" value="1"/>
</dbReference>
<dbReference type="PANTHER" id="PTHR11700">
    <property type="entry name" value="30S RIBOSOMAL PROTEIN S10 FAMILY MEMBER"/>
    <property type="match status" value="1"/>
</dbReference>
<dbReference type="Pfam" id="PF00338">
    <property type="entry name" value="Ribosomal_S10"/>
    <property type="match status" value="1"/>
</dbReference>
<dbReference type="PRINTS" id="PR00971">
    <property type="entry name" value="RIBOSOMALS10"/>
</dbReference>
<dbReference type="SMART" id="SM01403">
    <property type="entry name" value="Ribosomal_S10"/>
    <property type="match status" value="1"/>
</dbReference>
<dbReference type="SUPFAM" id="SSF54999">
    <property type="entry name" value="Ribosomal protein S10"/>
    <property type="match status" value="1"/>
</dbReference>
<dbReference type="PROSITE" id="PS00361">
    <property type="entry name" value="RIBOSOMAL_S10"/>
    <property type="match status" value="1"/>
</dbReference>
<feature type="chain" id="PRO_1000196291" description="Small ribosomal subunit protein uS10">
    <location>
        <begin position="1"/>
        <end position="102"/>
    </location>
</feature>
<gene>
    <name evidence="1" type="primary">rpsJ</name>
    <name type="ordered locus">BBR47_02200</name>
</gene>
<keyword id="KW-1185">Reference proteome</keyword>
<keyword id="KW-0687">Ribonucleoprotein</keyword>
<keyword id="KW-0689">Ribosomal protein</keyword>